<gene>
    <name evidence="1" type="primary">rpoB</name>
</gene>
<reference key="1">
    <citation type="submission" date="2002-10" db="EMBL/GenBank/DDBJ databases">
        <title>Rifampin resistance and its fitness cost in Enterococcus faecium.</title>
        <authorList>
            <person name="Enne V.I."/>
            <person name="Bennett P.M."/>
        </authorList>
    </citation>
    <scope>NUCLEOTIDE SEQUENCE [GENOMIC DNA]</scope>
    <source>
        <strain>38-15</strain>
    </source>
</reference>
<organism>
    <name type="scientific">Enterococcus faecium</name>
    <name type="common">Streptococcus faecium</name>
    <dbReference type="NCBI Taxonomy" id="1352"/>
    <lineage>
        <taxon>Bacteria</taxon>
        <taxon>Bacillati</taxon>
        <taxon>Bacillota</taxon>
        <taxon>Bacilli</taxon>
        <taxon>Lactobacillales</taxon>
        <taxon>Enterococcaceae</taxon>
        <taxon>Enterococcus</taxon>
    </lineage>
</organism>
<dbReference type="EC" id="2.7.7.6" evidence="1"/>
<dbReference type="EMBL" id="AY167141">
    <property type="protein sequence ID" value="AAO00731.1"/>
    <property type="molecule type" value="Genomic_DNA"/>
</dbReference>
<dbReference type="SMR" id="Q8GCR3"/>
<dbReference type="GO" id="GO:0000428">
    <property type="term" value="C:DNA-directed RNA polymerase complex"/>
    <property type="evidence" value="ECO:0007669"/>
    <property type="project" value="UniProtKB-KW"/>
</dbReference>
<dbReference type="GO" id="GO:0003677">
    <property type="term" value="F:DNA binding"/>
    <property type="evidence" value="ECO:0007669"/>
    <property type="project" value="UniProtKB-UniRule"/>
</dbReference>
<dbReference type="GO" id="GO:0003899">
    <property type="term" value="F:DNA-directed RNA polymerase activity"/>
    <property type="evidence" value="ECO:0007669"/>
    <property type="project" value="UniProtKB-UniRule"/>
</dbReference>
<dbReference type="GO" id="GO:0032549">
    <property type="term" value="F:ribonucleoside binding"/>
    <property type="evidence" value="ECO:0007669"/>
    <property type="project" value="InterPro"/>
</dbReference>
<dbReference type="GO" id="GO:0006351">
    <property type="term" value="P:DNA-templated transcription"/>
    <property type="evidence" value="ECO:0007669"/>
    <property type="project" value="UniProtKB-UniRule"/>
</dbReference>
<dbReference type="CDD" id="cd00653">
    <property type="entry name" value="RNA_pol_B_RPB2"/>
    <property type="match status" value="1"/>
</dbReference>
<dbReference type="FunFam" id="3.90.1800.10:FF:000001">
    <property type="entry name" value="DNA-directed RNA polymerase subunit beta"/>
    <property type="match status" value="1"/>
</dbReference>
<dbReference type="Gene3D" id="2.40.50.100">
    <property type="match status" value="1"/>
</dbReference>
<dbReference type="Gene3D" id="2.40.50.150">
    <property type="match status" value="1"/>
</dbReference>
<dbReference type="Gene3D" id="3.90.1100.10">
    <property type="match status" value="2"/>
</dbReference>
<dbReference type="Gene3D" id="2.30.150.10">
    <property type="entry name" value="DNA-directed RNA polymerase, beta subunit, external 1 domain"/>
    <property type="match status" value="1"/>
</dbReference>
<dbReference type="Gene3D" id="2.40.270.10">
    <property type="entry name" value="DNA-directed RNA polymerase, subunit 2, domain 6"/>
    <property type="match status" value="1"/>
</dbReference>
<dbReference type="Gene3D" id="3.90.1800.10">
    <property type="entry name" value="RNA polymerase alpha subunit dimerisation domain"/>
    <property type="match status" value="1"/>
</dbReference>
<dbReference type="Gene3D" id="3.90.1110.10">
    <property type="entry name" value="RNA polymerase Rpb2, domain 2"/>
    <property type="match status" value="1"/>
</dbReference>
<dbReference type="HAMAP" id="MF_01321">
    <property type="entry name" value="RNApol_bact_RpoB"/>
    <property type="match status" value="1"/>
</dbReference>
<dbReference type="InterPro" id="IPR042107">
    <property type="entry name" value="DNA-dir_RNA_pol_bsu_ext_1_sf"/>
</dbReference>
<dbReference type="InterPro" id="IPR019462">
    <property type="entry name" value="DNA-dir_RNA_pol_bsu_external_1"/>
</dbReference>
<dbReference type="InterPro" id="IPR015712">
    <property type="entry name" value="DNA-dir_RNA_pol_su2"/>
</dbReference>
<dbReference type="InterPro" id="IPR007120">
    <property type="entry name" value="DNA-dir_RNAP_su2_dom"/>
</dbReference>
<dbReference type="InterPro" id="IPR037033">
    <property type="entry name" value="DNA-dir_RNAP_su2_hyb_sf"/>
</dbReference>
<dbReference type="InterPro" id="IPR010243">
    <property type="entry name" value="RNA_pol_bsu_bac"/>
</dbReference>
<dbReference type="InterPro" id="IPR007121">
    <property type="entry name" value="RNA_pol_bsu_CS"/>
</dbReference>
<dbReference type="InterPro" id="IPR007644">
    <property type="entry name" value="RNA_pol_bsu_protrusion"/>
</dbReference>
<dbReference type="InterPro" id="IPR007642">
    <property type="entry name" value="RNA_pol_Rpb2_2"/>
</dbReference>
<dbReference type="InterPro" id="IPR037034">
    <property type="entry name" value="RNA_pol_Rpb2_2_sf"/>
</dbReference>
<dbReference type="InterPro" id="IPR007645">
    <property type="entry name" value="RNA_pol_Rpb2_3"/>
</dbReference>
<dbReference type="InterPro" id="IPR007641">
    <property type="entry name" value="RNA_pol_Rpb2_7"/>
</dbReference>
<dbReference type="InterPro" id="IPR014724">
    <property type="entry name" value="RNA_pol_RPB2_OB-fold"/>
</dbReference>
<dbReference type="NCBIfam" id="NF001616">
    <property type="entry name" value="PRK00405.1"/>
    <property type="match status" value="1"/>
</dbReference>
<dbReference type="NCBIfam" id="TIGR02013">
    <property type="entry name" value="rpoB"/>
    <property type="match status" value="1"/>
</dbReference>
<dbReference type="PANTHER" id="PTHR20856">
    <property type="entry name" value="DNA-DIRECTED RNA POLYMERASE I SUBUNIT 2"/>
    <property type="match status" value="1"/>
</dbReference>
<dbReference type="Pfam" id="PF04563">
    <property type="entry name" value="RNA_pol_Rpb2_1"/>
    <property type="match status" value="1"/>
</dbReference>
<dbReference type="Pfam" id="PF04561">
    <property type="entry name" value="RNA_pol_Rpb2_2"/>
    <property type="match status" value="2"/>
</dbReference>
<dbReference type="Pfam" id="PF04565">
    <property type="entry name" value="RNA_pol_Rpb2_3"/>
    <property type="match status" value="1"/>
</dbReference>
<dbReference type="Pfam" id="PF10385">
    <property type="entry name" value="RNA_pol_Rpb2_45"/>
    <property type="match status" value="1"/>
</dbReference>
<dbReference type="Pfam" id="PF00562">
    <property type="entry name" value="RNA_pol_Rpb2_6"/>
    <property type="match status" value="1"/>
</dbReference>
<dbReference type="Pfam" id="PF04560">
    <property type="entry name" value="RNA_pol_Rpb2_7"/>
    <property type="match status" value="1"/>
</dbReference>
<dbReference type="SUPFAM" id="SSF64484">
    <property type="entry name" value="beta and beta-prime subunits of DNA dependent RNA-polymerase"/>
    <property type="match status" value="1"/>
</dbReference>
<dbReference type="PROSITE" id="PS01166">
    <property type="entry name" value="RNA_POL_BETA"/>
    <property type="match status" value="1"/>
</dbReference>
<protein>
    <recommendedName>
        <fullName evidence="1">DNA-directed RNA polymerase subunit beta</fullName>
        <shortName evidence="1">RNAP subunit beta</shortName>
        <ecNumber evidence="1">2.7.7.6</ecNumber>
    </recommendedName>
    <alternativeName>
        <fullName evidence="1">RNA polymerase subunit beta</fullName>
    </alternativeName>
    <alternativeName>
        <fullName evidence="1">Transcriptase subunit beta</fullName>
    </alternativeName>
</protein>
<name>RPOB4_ENTFC</name>
<feature type="chain" id="PRO_0000047902" description="DNA-directed RNA polymerase subunit beta">
    <location>
        <begin position="1"/>
        <end position="1208"/>
    </location>
</feature>
<proteinExistence type="inferred from homology"/>
<sequence length="1208" mass="135006">MKSLAGHVVKYGKHRERRSFARISEVLELPNLIEIQTDSYQWFLDEGLREMFEDILPIDDFNGNLSLEFVDYELKEPKYTVAEARAHDANYSAPLHVTLRLTNRETGEIKAQEVFFGDFPLMTEQGTFIINGAERVIVSQLVRSPGVYFHGKVDKNGKEGFGSTVIPNRGAWLEMETDAKDISYVRIDRTRKIPLTVLVRALGFGSDDTIFEIFGDSETLRNTVEKDLHKNASDSRTEEGLKDVYERLRPGEPKTADSSRNLLNARFFDPKRYDLANVGRYKVNKKLDLKTRLLNLTLAETLVDPETGEIIVEKGTVLTHQVMETLAPFIENGLNSVTYYPSEDGVVTDPMTVQVIKVFSPKDPEREVNVIGNGYPEAPVKTVRPADIIASMSYFLNLMEGIGNVDDIDHLGNRRIRSVGELLQNQFRIGLARMERVVRERMSIQDTETLTPQQLINIRPVVASIKEFFGSSQLSQFMDQTNPLGELTHKRRLSALGPGGLTRDRAGYEVRDVHYSHYGRMCPIETPEGPNIGLINSLSSYAKVNKFGFIETPYRRVDRQTGRVTDQIDYLTADIEDHYIVAQANSPLNEDGTFAQDVVMARAQSENLEVSIDKVDYMDVSPKQVVAVATACIPFLENDDSNRALMGANMQRQAVPLINPQAPWVGTGMEYKSAHDSGAALLCKHDGVVEFVDASQIRVRRDNGALDKYDITKFRRSNSGTSYNQRPIVHLGEKVEKGDTLADGPSMEQGEMALGQNVLSVSMTWEGYNYEDAIIMSRRLVKDDVYTSIHIEEYESEARDTKLGPEEITREIPNVGEDALKDLDEMGIIRIGAEVKDGDLLVGKVTPKGVTELSAEERLLHAIFGEKAREVRDTSLRVPHGGGGIVHDVKIFTREAGDELSPGVNMLVRVYIVQKRKIHEGDKMAGRHGNKGVVSRIMPEEDMPFLPDGTPIDIMLNPLGVPSRMNIGQVLELHLGMAARQLGIHVATPVFDGASDEDVWETVREAGMASEAKTVLYDGRTGEPFDGRVSVGVMYMIKLAHMVDDKLHARSIGPYSLVTQQPLGGKAQFGGQRFGEMEVWALEAYGAAYTLQEILTSKSDDVVGRVKTYEAIVKGEPIPKPGVPESFRVLVKELQSLGLDMRVLDIKDAEIELRDMDDEDDDLITVDALTKFAEQQTAKELEKKAAEQVEDERQDVIQNFETAEDKLD</sequence>
<accession>Q8GCR3</accession>
<keyword id="KW-0240">DNA-directed RNA polymerase</keyword>
<keyword id="KW-0548">Nucleotidyltransferase</keyword>
<keyword id="KW-0804">Transcription</keyword>
<keyword id="KW-0808">Transferase</keyword>
<comment type="function">
    <text evidence="1">DNA-dependent RNA polymerase catalyzes the transcription of DNA into RNA using the four ribonucleoside triphosphates as substrates.</text>
</comment>
<comment type="catalytic activity">
    <reaction evidence="1">
        <text>RNA(n) + a ribonucleoside 5'-triphosphate = RNA(n+1) + diphosphate</text>
        <dbReference type="Rhea" id="RHEA:21248"/>
        <dbReference type="Rhea" id="RHEA-COMP:14527"/>
        <dbReference type="Rhea" id="RHEA-COMP:17342"/>
        <dbReference type="ChEBI" id="CHEBI:33019"/>
        <dbReference type="ChEBI" id="CHEBI:61557"/>
        <dbReference type="ChEBI" id="CHEBI:140395"/>
        <dbReference type="EC" id="2.7.7.6"/>
    </reaction>
</comment>
<comment type="subunit">
    <text evidence="1">The RNAP catalytic core consists of 2 alpha, 1 beta, 1 beta' and 1 omega subunit. When a sigma factor is associated with the core the holoenzyme is formed, which can initiate transcription.</text>
</comment>
<comment type="similarity">
    <text evidence="1">Belongs to the RNA polymerase beta chain family.</text>
</comment>
<evidence type="ECO:0000255" key="1">
    <source>
        <dbReference type="HAMAP-Rule" id="MF_01321"/>
    </source>
</evidence>